<name>GRPE_BURMS</name>
<organism>
    <name type="scientific">Burkholderia mallei (strain SAVP1)</name>
    <dbReference type="NCBI Taxonomy" id="320388"/>
    <lineage>
        <taxon>Bacteria</taxon>
        <taxon>Pseudomonadati</taxon>
        <taxon>Pseudomonadota</taxon>
        <taxon>Betaproteobacteria</taxon>
        <taxon>Burkholderiales</taxon>
        <taxon>Burkholderiaceae</taxon>
        <taxon>Burkholderia</taxon>
        <taxon>pseudomallei group</taxon>
    </lineage>
</organism>
<evidence type="ECO:0000255" key="1">
    <source>
        <dbReference type="HAMAP-Rule" id="MF_01151"/>
    </source>
</evidence>
<evidence type="ECO:0000256" key="2">
    <source>
        <dbReference type="SAM" id="MobiDB-lite"/>
    </source>
</evidence>
<accession>A1V0U4</accession>
<dbReference type="EMBL" id="CP000526">
    <property type="protein sequence ID" value="ABM52290.1"/>
    <property type="molecule type" value="Genomic_DNA"/>
</dbReference>
<dbReference type="RefSeq" id="WP_004194243.1">
    <property type="nucleotide sequence ID" value="NC_008785.1"/>
</dbReference>
<dbReference type="SMR" id="A1V0U4"/>
<dbReference type="GeneID" id="93061417"/>
<dbReference type="KEGG" id="bmv:BMASAVP1_A0498"/>
<dbReference type="HOGENOM" id="CLU_057217_6_1_4"/>
<dbReference type="GO" id="GO:0005829">
    <property type="term" value="C:cytosol"/>
    <property type="evidence" value="ECO:0007669"/>
    <property type="project" value="TreeGrafter"/>
</dbReference>
<dbReference type="GO" id="GO:0000774">
    <property type="term" value="F:adenyl-nucleotide exchange factor activity"/>
    <property type="evidence" value="ECO:0007669"/>
    <property type="project" value="InterPro"/>
</dbReference>
<dbReference type="GO" id="GO:0042803">
    <property type="term" value="F:protein homodimerization activity"/>
    <property type="evidence" value="ECO:0007669"/>
    <property type="project" value="InterPro"/>
</dbReference>
<dbReference type="GO" id="GO:0051087">
    <property type="term" value="F:protein-folding chaperone binding"/>
    <property type="evidence" value="ECO:0007669"/>
    <property type="project" value="InterPro"/>
</dbReference>
<dbReference type="GO" id="GO:0051082">
    <property type="term" value="F:unfolded protein binding"/>
    <property type="evidence" value="ECO:0007669"/>
    <property type="project" value="TreeGrafter"/>
</dbReference>
<dbReference type="GO" id="GO:0006457">
    <property type="term" value="P:protein folding"/>
    <property type="evidence" value="ECO:0007669"/>
    <property type="project" value="InterPro"/>
</dbReference>
<dbReference type="CDD" id="cd00446">
    <property type="entry name" value="GrpE"/>
    <property type="match status" value="1"/>
</dbReference>
<dbReference type="FunFam" id="2.30.22.10:FF:000001">
    <property type="entry name" value="Protein GrpE"/>
    <property type="match status" value="1"/>
</dbReference>
<dbReference type="Gene3D" id="3.90.20.20">
    <property type="match status" value="1"/>
</dbReference>
<dbReference type="Gene3D" id="2.30.22.10">
    <property type="entry name" value="Head domain of nucleotide exchange factor GrpE"/>
    <property type="match status" value="1"/>
</dbReference>
<dbReference type="HAMAP" id="MF_01151">
    <property type="entry name" value="GrpE"/>
    <property type="match status" value="1"/>
</dbReference>
<dbReference type="InterPro" id="IPR000740">
    <property type="entry name" value="GrpE"/>
</dbReference>
<dbReference type="InterPro" id="IPR013805">
    <property type="entry name" value="GrpE_coiled_coil"/>
</dbReference>
<dbReference type="InterPro" id="IPR009012">
    <property type="entry name" value="GrpE_head"/>
</dbReference>
<dbReference type="NCBIfam" id="NF010737">
    <property type="entry name" value="PRK14139.1"/>
    <property type="match status" value="1"/>
</dbReference>
<dbReference type="NCBIfam" id="NF010738">
    <property type="entry name" value="PRK14140.1"/>
    <property type="match status" value="1"/>
</dbReference>
<dbReference type="NCBIfam" id="NF010748">
    <property type="entry name" value="PRK14150.1"/>
    <property type="match status" value="1"/>
</dbReference>
<dbReference type="PANTHER" id="PTHR21237">
    <property type="entry name" value="GRPE PROTEIN"/>
    <property type="match status" value="1"/>
</dbReference>
<dbReference type="PANTHER" id="PTHR21237:SF23">
    <property type="entry name" value="GRPE PROTEIN HOMOLOG, MITOCHONDRIAL"/>
    <property type="match status" value="1"/>
</dbReference>
<dbReference type="Pfam" id="PF01025">
    <property type="entry name" value="GrpE"/>
    <property type="match status" value="1"/>
</dbReference>
<dbReference type="PRINTS" id="PR00773">
    <property type="entry name" value="GRPEPROTEIN"/>
</dbReference>
<dbReference type="SUPFAM" id="SSF58014">
    <property type="entry name" value="Coiled-coil domain of nucleotide exchange factor GrpE"/>
    <property type="match status" value="1"/>
</dbReference>
<dbReference type="SUPFAM" id="SSF51064">
    <property type="entry name" value="Head domain of nucleotide exchange factor GrpE"/>
    <property type="match status" value="1"/>
</dbReference>
<dbReference type="PROSITE" id="PS01071">
    <property type="entry name" value="GRPE"/>
    <property type="match status" value="1"/>
</dbReference>
<comment type="function">
    <text evidence="1">Participates actively in the response to hyperosmotic and heat shock by preventing the aggregation of stress-denatured proteins, in association with DnaK and GrpE. It is the nucleotide exchange factor for DnaK and may function as a thermosensor. Unfolded proteins bind initially to DnaJ; upon interaction with the DnaJ-bound protein, DnaK hydrolyzes its bound ATP, resulting in the formation of a stable complex. GrpE releases ADP from DnaK; ATP binding to DnaK triggers the release of the substrate protein, thus completing the reaction cycle. Several rounds of ATP-dependent interactions between DnaJ, DnaK and GrpE are required for fully efficient folding.</text>
</comment>
<comment type="subunit">
    <text evidence="1">Homodimer.</text>
</comment>
<comment type="subcellular location">
    <subcellularLocation>
        <location evidence="1">Cytoplasm</location>
    </subcellularLocation>
</comment>
<comment type="similarity">
    <text evidence="1">Belongs to the GrpE family.</text>
</comment>
<feature type="chain" id="PRO_1000053555" description="Protein GrpE">
    <location>
        <begin position="1"/>
        <end position="185"/>
    </location>
</feature>
<feature type="region of interest" description="Disordered" evidence="2">
    <location>
        <begin position="1"/>
        <end position="38"/>
    </location>
</feature>
<feature type="compositionally biased region" description="Polar residues" evidence="2">
    <location>
        <begin position="1"/>
        <end position="11"/>
    </location>
</feature>
<feature type="compositionally biased region" description="Low complexity" evidence="2">
    <location>
        <begin position="19"/>
        <end position="38"/>
    </location>
</feature>
<gene>
    <name evidence="1" type="primary">grpE</name>
    <name type="ordered locus">BMASAVP1_A0498</name>
</gene>
<keyword id="KW-0143">Chaperone</keyword>
<keyword id="KW-0963">Cytoplasm</keyword>
<keyword id="KW-0346">Stress response</keyword>
<protein>
    <recommendedName>
        <fullName evidence="1">Protein GrpE</fullName>
    </recommendedName>
    <alternativeName>
        <fullName evidence="1">HSP-70 cofactor</fullName>
    </alternativeName>
</protein>
<reference key="1">
    <citation type="journal article" date="2010" name="Genome Biol. Evol.">
        <title>Continuing evolution of Burkholderia mallei through genome reduction and large-scale rearrangements.</title>
        <authorList>
            <person name="Losada L."/>
            <person name="Ronning C.M."/>
            <person name="DeShazer D."/>
            <person name="Woods D."/>
            <person name="Fedorova N."/>
            <person name="Kim H.S."/>
            <person name="Shabalina S.A."/>
            <person name="Pearson T.R."/>
            <person name="Brinkac L."/>
            <person name="Tan P."/>
            <person name="Nandi T."/>
            <person name="Crabtree J."/>
            <person name="Badger J."/>
            <person name="Beckstrom-Sternberg S."/>
            <person name="Saqib M."/>
            <person name="Schutzer S.E."/>
            <person name="Keim P."/>
            <person name="Nierman W.C."/>
        </authorList>
    </citation>
    <scope>NUCLEOTIDE SEQUENCE [LARGE SCALE GENOMIC DNA]</scope>
    <source>
        <strain>SAVP1</strain>
    </source>
</reference>
<proteinExistence type="inferred from homology"/>
<sequence length="185" mass="19741">MENTQENPTDQTTEETGREAQAAEPAAQAAENAAPAAEAALAEAQAKIAELQESFLRAKAETENVRRRAQDDVAKAHKFAIEGFAENLLPVLDSLEAAVGDTSGDLAKVREGVELTLRQLTSALEKGRVAALNPVGEKFDPHLHQAISMVPADQEPNTVVAVLQKGYTIADRVLRPALVTVAQPK</sequence>